<organism>
    <name type="scientific">Saccharomyces cerevisiae (strain ATCC 204508 / S288c)</name>
    <name type="common">Baker's yeast</name>
    <dbReference type="NCBI Taxonomy" id="559292"/>
    <lineage>
        <taxon>Eukaryota</taxon>
        <taxon>Fungi</taxon>
        <taxon>Dikarya</taxon>
        <taxon>Ascomycota</taxon>
        <taxon>Saccharomycotina</taxon>
        <taxon>Saccharomycetes</taxon>
        <taxon>Saccharomycetales</taxon>
        <taxon>Saccharomycetaceae</taxon>
        <taxon>Saccharomyces</taxon>
    </lineage>
</organism>
<protein>
    <recommendedName>
        <fullName>Putative uncharacterized protein YNL226W</fullName>
    </recommendedName>
</protein>
<comment type="miscellaneous">
    <text evidence="1">Partially overlaps JJJ1.</text>
</comment>
<comment type="caution">
    <text evidence="2">Product of a dubious gene prediction unlikely to encode a functional protein. Because of that it is not part of the S.cerevisiae S288c complete/reference proteome set.</text>
</comment>
<evidence type="ECO:0000305" key="1"/>
<evidence type="ECO:0000305" key="2">
    <source>
    </source>
</evidence>
<proteinExistence type="uncertain"/>
<sequence length="136" mass="16040">MLFPGGQTVLHKRLESQQIFVWLLQHYLGFYLGDIVGPFYGKLFLTQDQKHAFRPLKAHSSRSSSVIFEVVGYHYTDINSWLVRLLLCKKSYFAMTSNFFHVYFFSILKTRKSVNIKCWPLKPSNFTTNEYFIHTS</sequence>
<reference key="1">
    <citation type="journal article" date="1996" name="Yeast">
        <title>The DNA sequence of cosmid 14-5 from chromosome XIV reveals 21 open reading frames including a novel gene encoding a globin-like domain.</title>
        <authorList>
            <person name="Pandolfo D."/>
            <person name="de Antoni A."/>
            <person name="Lanfranchi G."/>
            <person name="Valle G."/>
        </authorList>
    </citation>
    <scope>NUCLEOTIDE SEQUENCE [GENOMIC DNA]</scope>
</reference>
<reference key="2">
    <citation type="journal article" date="1997" name="Nature">
        <title>The nucleotide sequence of Saccharomyces cerevisiae chromosome XIV and its evolutionary implications.</title>
        <authorList>
            <person name="Philippsen P."/>
            <person name="Kleine K."/>
            <person name="Poehlmann R."/>
            <person name="Duesterhoeft A."/>
            <person name="Hamberg K."/>
            <person name="Hegemann J.H."/>
            <person name="Obermaier B."/>
            <person name="Urrestarazu L.A."/>
            <person name="Aert R."/>
            <person name="Albermann K."/>
            <person name="Altmann R."/>
            <person name="Andre B."/>
            <person name="Baladron V."/>
            <person name="Ballesta J.P.G."/>
            <person name="Becam A.-M."/>
            <person name="Beinhauer J.D."/>
            <person name="Boskovic J."/>
            <person name="Buitrago M.J."/>
            <person name="Bussereau F."/>
            <person name="Coster F."/>
            <person name="Crouzet M."/>
            <person name="D'Angelo M."/>
            <person name="Dal Pero F."/>
            <person name="De Antoni A."/>
            <person name="del Rey F."/>
            <person name="Doignon F."/>
            <person name="Domdey H."/>
            <person name="Dubois E."/>
            <person name="Fiedler T.A."/>
            <person name="Fleig U."/>
            <person name="Floeth M."/>
            <person name="Fritz C."/>
            <person name="Gaillardin C."/>
            <person name="Garcia-Cantalejo J.M."/>
            <person name="Glansdorff N."/>
            <person name="Goffeau A."/>
            <person name="Gueldener U."/>
            <person name="Herbert C.J."/>
            <person name="Heumann K."/>
            <person name="Heuss-Neitzel D."/>
            <person name="Hilbert H."/>
            <person name="Hinni K."/>
            <person name="Iraqui Houssaini I."/>
            <person name="Jacquet M."/>
            <person name="Jimenez A."/>
            <person name="Jonniaux J.-L."/>
            <person name="Karpfinger-Hartl L."/>
            <person name="Lanfranchi G."/>
            <person name="Lepingle A."/>
            <person name="Levesque H."/>
            <person name="Lyck R."/>
            <person name="Maftahi M."/>
            <person name="Mallet L."/>
            <person name="Maurer C.T.C."/>
            <person name="Messenguy F."/>
            <person name="Mewes H.-W."/>
            <person name="Moestl D."/>
            <person name="Nasr F."/>
            <person name="Nicaud J.-M."/>
            <person name="Niedenthal R.K."/>
            <person name="Pandolfo D."/>
            <person name="Pierard A."/>
            <person name="Piravandi E."/>
            <person name="Planta R.J."/>
            <person name="Pohl T.M."/>
            <person name="Purnelle B."/>
            <person name="Rebischung C."/>
            <person name="Remacha M.A."/>
            <person name="Revuelta J.L."/>
            <person name="Rinke M."/>
            <person name="Saiz J.E."/>
            <person name="Sartorello F."/>
            <person name="Scherens B."/>
            <person name="Sen-Gupta M."/>
            <person name="Soler-Mira A."/>
            <person name="Urbanus J.H.M."/>
            <person name="Valle G."/>
            <person name="Van Dyck L."/>
            <person name="Verhasselt P."/>
            <person name="Vierendeels F."/>
            <person name="Vissers S."/>
            <person name="Voet M."/>
            <person name="Volckaert G."/>
            <person name="Wach A."/>
            <person name="Wambutt R."/>
            <person name="Wedler H."/>
            <person name="Zollner A."/>
            <person name="Hani J."/>
        </authorList>
    </citation>
    <scope>NUCLEOTIDE SEQUENCE [LARGE SCALE GENOMIC DNA]</scope>
    <source>
        <strain>ATCC 204508 / S288c</strain>
    </source>
</reference>
<reference key="3">
    <citation type="journal article" date="2014" name="G3 (Bethesda)">
        <title>The reference genome sequence of Saccharomyces cerevisiae: Then and now.</title>
        <authorList>
            <person name="Engel S.R."/>
            <person name="Dietrich F.S."/>
            <person name="Fisk D.G."/>
            <person name="Binkley G."/>
            <person name="Balakrishnan R."/>
            <person name="Costanzo M.C."/>
            <person name="Dwight S.S."/>
            <person name="Hitz B.C."/>
            <person name="Karra K."/>
            <person name="Nash R.S."/>
            <person name="Weng S."/>
            <person name="Wong E.D."/>
            <person name="Lloyd P."/>
            <person name="Skrzypek M.S."/>
            <person name="Miyasato S.R."/>
            <person name="Simison M."/>
            <person name="Cherry J.M."/>
        </authorList>
    </citation>
    <scope>GENOME REANNOTATION</scope>
    <source>
        <strain>ATCC 204508 / S288c</strain>
    </source>
</reference>
<dbReference type="EMBL" id="Z69381">
    <property type="protein sequence ID" value="CAA93372.1"/>
    <property type="molecule type" value="Genomic_DNA"/>
</dbReference>
<dbReference type="EMBL" id="Z71504">
    <property type="protein sequence ID" value="CAA96133.1"/>
    <property type="molecule type" value="Genomic_DNA"/>
</dbReference>
<dbReference type="PIR" id="S63184">
    <property type="entry name" value="S63184"/>
</dbReference>
<dbReference type="DIP" id="DIP-4283N"/>
<dbReference type="IntAct" id="P53864">
    <property type="interactions" value="5"/>
</dbReference>
<dbReference type="PaxDb" id="4932-YNL226W"/>
<dbReference type="EnsemblFungi" id="YNL226W_mRNA">
    <property type="protein sequence ID" value="YNL226W"/>
    <property type="gene ID" value="YNL226W"/>
</dbReference>
<dbReference type="AGR" id="SGD:S000005170"/>
<dbReference type="SGD" id="S000005170">
    <property type="gene designation" value="YNL226W"/>
</dbReference>
<dbReference type="HOGENOM" id="CLU_1877061_0_0_1"/>
<dbReference type="GO" id="GO:0008361">
    <property type="term" value="P:regulation of cell size"/>
    <property type="evidence" value="ECO:0007001"/>
    <property type="project" value="SGD"/>
</dbReference>
<gene>
    <name type="ordered locus">YNL226W</name>
    <name type="ORF">N1259</name>
</gene>
<feature type="chain" id="PRO_0000203387" description="Putative uncharacterized protein YNL226W">
    <location>
        <begin position="1"/>
        <end position="136"/>
    </location>
</feature>
<accession>P53864</accession>
<name>YNW6_YEAST</name>